<organism>
    <name type="scientific">Bacillus cereus (strain 03BB102)</name>
    <dbReference type="NCBI Taxonomy" id="572264"/>
    <lineage>
        <taxon>Bacteria</taxon>
        <taxon>Bacillati</taxon>
        <taxon>Bacillota</taxon>
        <taxon>Bacilli</taxon>
        <taxon>Bacillales</taxon>
        <taxon>Bacillaceae</taxon>
        <taxon>Bacillus</taxon>
        <taxon>Bacillus cereus group</taxon>
    </lineage>
</organism>
<keyword id="KW-0687">Ribonucleoprotein</keyword>
<keyword id="KW-0689">Ribosomal protein</keyword>
<keyword id="KW-0694">RNA-binding</keyword>
<keyword id="KW-0699">rRNA-binding</keyword>
<accession>C1ET50</accession>
<dbReference type="EMBL" id="CP001407">
    <property type="protein sequence ID" value="ACO26306.1"/>
    <property type="molecule type" value="Genomic_DNA"/>
</dbReference>
<dbReference type="RefSeq" id="WP_000558200.1">
    <property type="nucleotide sequence ID" value="NZ_CP009318.1"/>
</dbReference>
<dbReference type="SMR" id="C1ET50"/>
<dbReference type="GeneID" id="93010932"/>
<dbReference type="KEGG" id="bcx:BCA_0150"/>
<dbReference type="PATRIC" id="fig|572264.18.peg.185"/>
<dbReference type="Proteomes" id="UP000002210">
    <property type="component" value="Chromosome"/>
</dbReference>
<dbReference type="GO" id="GO:1990904">
    <property type="term" value="C:ribonucleoprotein complex"/>
    <property type="evidence" value="ECO:0007669"/>
    <property type="project" value="UniProtKB-KW"/>
</dbReference>
<dbReference type="GO" id="GO:0005840">
    <property type="term" value="C:ribosome"/>
    <property type="evidence" value="ECO:0007669"/>
    <property type="project" value="UniProtKB-KW"/>
</dbReference>
<dbReference type="GO" id="GO:0019843">
    <property type="term" value="F:rRNA binding"/>
    <property type="evidence" value="ECO:0007669"/>
    <property type="project" value="UniProtKB-UniRule"/>
</dbReference>
<dbReference type="GO" id="GO:0003735">
    <property type="term" value="F:structural constituent of ribosome"/>
    <property type="evidence" value="ECO:0007669"/>
    <property type="project" value="InterPro"/>
</dbReference>
<dbReference type="GO" id="GO:0006412">
    <property type="term" value="P:translation"/>
    <property type="evidence" value="ECO:0007669"/>
    <property type="project" value="UniProtKB-UniRule"/>
</dbReference>
<dbReference type="CDD" id="cd06089">
    <property type="entry name" value="KOW_RPL26"/>
    <property type="match status" value="1"/>
</dbReference>
<dbReference type="FunFam" id="2.30.30.30:FF:000004">
    <property type="entry name" value="50S ribosomal protein L24"/>
    <property type="match status" value="1"/>
</dbReference>
<dbReference type="Gene3D" id="2.30.30.30">
    <property type="match status" value="1"/>
</dbReference>
<dbReference type="HAMAP" id="MF_01326_B">
    <property type="entry name" value="Ribosomal_uL24_B"/>
    <property type="match status" value="1"/>
</dbReference>
<dbReference type="InterPro" id="IPR005824">
    <property type="entry name" value="KOW"/>
</dbReference>
<dbReference type="InterPro" id="IPR014722">
    <property type="entry name" value="Rib_uL2_dom2"/>
</dbReference>
<dbReference type="InterPro" id="IPR003256">
    <property type="entry name" value="Ribosomal_uL24"/>
</dbReference>
<dbReference type="InterPro" id="IPR005825">
    <property type="entry name" value="Ribosomal_uL24_CS"/>
</dbReference>
<dbReference type="InterPro" id="IPR041988">
    <property type="entry name" value="Ribosomal_uL24_KOW"/>
</dbReference>
<dbReference type="InterPro" id="IPR008991">
    <property type="entry name" value="Translation_prot_SH3-like_sf"/>
</dbReference>
<dbReference type="NCBIfam" id="TIGR01079">
    <property type="entry name" value="rplX_bact"/>
    <property type="match status" value="1"/>
</dbReference>
<dbReference type="PANTHER" id="PTHR12903">
    <property type="entry name" value="MITOCHONDRIAL RIBOSOMAL PROTEIN L24"/>
    <property type="match status" value="1"/>
</dbReference>
<dbReference type="Pfam" id="PF00467">
    <property type="entry name" value="KOW"/>
    <property type="match status" value="1"/>
</dbReference>
<dbReference type="Pfam" id="PF17136">
    <property type="entry name" value="ribosomal_L24"/>
    <property type="match status" value="1"/>
</dbReference>
<dbReference type="SMART" id="SM00739">
    <property type="entry name" value="KOW"/>
    <property type="match status" value="1"/>
</dbReference>
<dbReference type="SUPFAM" id="SSF50104">
    <property type="entry name" value="Translation proteins SH3-like domain"/>
    <property type="match status" value="1"/>
</dbReference>
<dbReference type="PROSITE" id="PS01108">
    <property type="entry name" value="RIBOSOMAL_L24"/>
    <property type="match status" value="1"/>
</dbReference>
<protein>
    <recommendedName>
        <fullName evidence="1">Large ribosomal subunit protein uL24</fullName>
    </recommendedName>
    <alternativeName>
        <fullName evidence="2">50S ribosomal protein L24</fullName>
    </alternativeName>
</protein>
<gene>
    <name evidence="1" type="primary">rplX</name>
    <name type="ordered locus">BCA_0150</name>
</gene>
<reference key="1">
    <citation type="submission" date="2009-02" db="EMBL/GenBank/DDBJ databases">
        <title>Genome sequence of Bacillus cereus 03BB102.</title>
        <authorList>
            <person name="Dodson R.J."/>
            <person name="Jackson P."/>
            <person name="Munk A.C."/>
            <person name="Brettin T."/>
            <person name="Bruce D."/>
            <person name="Detter C."/>
            <person name="Tapia R."/>
            <person name="Han C."/>
            <person name="Sutton G."/>
            <person name="Sims D."/>
        </authorList>
    </citation>
    <scope>NUCLEOTIDE SEQUENCE [LARGE SCALE GENOMIC DNA]</scope>
    <source>
        <strain>03BB102</strain>
    </source>
</reference>
<evidence type="ECO:0000255" key="1">
    <source>
        <dbReference type="HAMAP-Rule" id="MF_01326"/>
    </source>
</evidence>
<evidence type="ECO:0000305" key="2"/>
<comment type="function">
    <text evidence="1">One of two assembly initiator proteins, it binds directly to the 5'-end of the 23S rRNA, where it nucleates assembly of the 50S subunit.</text>
</comment>
<comment type="function">
    <text evidence="1">One of the proteins that surrounds the polypeptide exit tunnel on the outside of the subunit.</text>
</comment>
<comment type="subunit">
    <text evidence="1">Part of the 50S ribosomal subunit.</text>
</comment>
<comment type="similarity">
    <text evidence="1">Belongs to the universal ribosomal protein uL24 family.</text>
</comment>
<sequence length="103" mass="11228">MHVKKGDKVQVITGKDKGKQGVILVAFPKQNRVIVEGVNIVKKHSKPSQLNPQGGIITKEAPIHVSNVMILDPKTGEPTRVGFKVEDGKKVRIAKKSGELLDK</sequence>
<feature type="chain" id="PRO_1000165924" description="Large ribosomal subunit protein uL24">
    <location>
        <begin position="1"/>
        <end position="103"/>
    </location>
</feature>
<name>RL24_BACC3</name>
<proteinExistence type="inferred from homology"/>